<evidence type="ECO:0000250" key="1">
    <source>
        <dbReference type="UniProtKB" id="Q9W032"/>
    </source>
</evidence>
<evidence type="ECO:0000256" key="2">
    <source>
        <dbReference type="SAM" id="MobiDB-lite"/>
    </source>
</evidence>
<evidence type="ECO:0000269" key="3">
    <source>
    </source>
</evidence>
<evidence type="ECO:0000269" key="4">
    <source>
    </source>
</evidence>
<evidence type="ECO:0000269" key="5">
    <source>
    </source>
</evidence>
<evidence type="ECO:0000269" key="6">
    <source>
    </source>
</evidence>
<evidence type="ECO:0000269" key="7">
    <source>
    </source>
</evidence>
<evidence type="ECO:0000269" key="8">
    <source>
    </source>
</evidence>
<evidence type="ECO:0000269" key="9">
    <source>
    </source>
</evidence>
<evidence type="ECO:0000269" key="10">
    <source>
    </source>
</evidence>
<evidence type="ECO:0000269" key="11">
    <source>
    </source>
</evidence>
<evidence type="ECO:0000269" key="12">
    <source>
    </source>
</evidence>
<evidence type="ECO:0000303" key="13">
    <source>
    </source>
</evidence>
<evidence type="ECO:0000303" key="14">
    <source>
    </source>
</evidence>
<evidence type="ECO:0000303" key="15">
    <source ref="3"/>
</evidence>
<evidence type="ECO:0000305" key="16"/>
<evidence type="ECO:0000305" key="17">
    <source>
    </source>
</evidence>
<evidence type="ECO:0000305" key="18">
    <source>
    </source>
</evidence>
<evidence type="ECO:0007744" key="19">
    <source>
    </source>
</evidence>
<evidence type="ECO:0007744" key="20">
    <source>
    </source>
</evidence>
<keyword id="KW-0010">Activator</keyword>
<keyword id="KW-0025">Alternative splicing</keyword>
<keyword id="KW-0963">Cytoplasm</keyword>
<keyword id="KW-0507">mRNA processing</keyword>
<keyword id="KW-0508">mRNA splicing</keyword>
<keyword id="KW-0539">Nucleus</keyword>
<keyword id="KW-0597">Phosphoprotein</keyword>
<keyword id="KW-1267">Proteomics identification</keyword>
<keyword id="KW-1185">Reference proteome</keyword>
<keyword id="KW-0804">Transcription</keyword>
<keyword id="KW-0805">Transcription regulation</keyword>
<feature type="chain" id="PRO_0000220844" description="Protein ecdysoneless homolog">
    <location>
        <begin position="1"/>
        <end position="644"/>
    </location>
</feature>
<feature type="region of interest" description="Disordered" evidence="2">
    <location>
        <begin position="430"/>
        <end position="449"/>
    </location>
</feature>
<feature type="region of interest" description="Transcription activation" evidence="6">
    <location>
        <begin position="439"/>
        <end position="644"/>
    </location>
</feature>
<feature type="region of interest" description="Involved in nuclear export" evidence="6">
    <location>
        <begin position="481"/>
        <end position="497"/>
    </location>
</feature>
<feature type="region of interest" description="Disordered" evidence="2">
    <location>
        <begin position="496"/>
        <end position="537"/>
    </location>
</feature>
<feature type="region of interest" description="Acidic region required for transactivation activity" evidence="6">
    <location>
        <begin position="502"/>
        <end position="532"/>
    </location>
</feature>
<feature type="region of interest" description="Disordered" evidence="2">
    <location>
        <begin position="567"/>
        <end position="589"/>
    </location>
</feature>
<feature type="region of interest" description="Disordered" evidence="2">
    <location>
        <begin position="623"/>
        <end position="644"/>
    </location>
</feature>
<feature type="compositionally biased region" description="Basic and acidic residues" evidence="2">
    <location>
        <begin position="431"/>
        <end position="447"/>
    </location>
</feature>
<feature type="compositionally biased region" description="Acidic residues" evidence="2">
    <location>
        <begin position="503"/>
        <end position="523"/>
    </location>
</feature>
<feature type="compositionally biased region" description="Basic and acidic residues" evidence="2">
    <location>
        <begin position="524"/>
        <end position="534"/>
    </location>
</feature>
<feature type="compositionally biased region" description="Polar residues" evidence="2">
    <location>
        <begin position="567"/>
        <end position="577"/>
    </location>
</feature>
<feature type="modified residue" description="Phosphoserine" evidence="20">
    <location>
        <position position="503"/>
    </location>
</feature>
<feature type="modified residue" description="Phosphoserine" evidence="20">
    <location>
        <position position="505"/>
    </location>
</feature>
<feature type="modified residue" description="Phosphoserine" evidence="19 20">
    <location>
        <position position="518"/>
    </location>
</feature>
<feature type="splice variant" id="VSP_045670" description="In isoform 2." evidence="15">
    <location>
        <begin position="262"/>
        <end position="304"/>
    </location>
</feature>
<feature type="splice variant" id="VSP_045671" description="In isoform 3." evidence="13">
    <original>E</original>
    <variation>ERLEVQWRDPGLLQAPPPGFTPFICLSLLSTWDN</variation>
    <location>
        <position position="375"/>
    </location>
</feature>
<feature type="sequence variant" id="VAR_051970" description="In dbSNP:rs3812619.">
    <original>R</original>
    <variation>Q</variation>
    <location>
        <position position="45"/>
    </location>
</feature>
<feature type="sequence variant" id="VAR_012191" description="In dbSNP:rs151023501." evidence="3">
    <original>R</original>
    <variation>G</variation>
    <location>
        <position position="281"/>
    </location>
</feature>
<feature type="sequence variant" id="VAR_051971" description="In dbSNP:rs3736518.">
    <original>E</original>
    <variation>Q</variation>
    <location>
        <position position="452"/>
    </location>
</feature>
<feature type="sequence variant" id="VAR_051972" description="In dbSNP:rs36152134.">
    <original>N</original>
    <variation>S</variation>
    <location>
        <position position="501"/>
    </location>
</feature>
<feature type="sequence variant" id="VAR_051973" description="In dbSNP:rs2271904.">
    <original>D</original>
    <variation>G</variation>
    <location>
        <position position="634"/>
    </location>
</feature>
<feature type="mutagenesis site" description="Decreases transactivation activity." evidence="6">
    <original>I</original>
    <variation>A</variation>
    <location>
        <position position="481"/>
    </location>
</feature>
<feature type="mutagenesis site" description="Decreases transactivation activity." evidence="6">
    <original>D</original>
    <variation>F</variation>
    <location>
        <position position="484"/>
    </location>
</feature>
<feature type="mutagenesis site" description="Decreases transactivation activity." evidence="6">
    <original>L</original>
    <variation>A</variation>
    <location>
        <position position="489"/>
    </location>
</feature>
<feature type="mutagenesis site" description="Greatly impairs in vitro phosphorylation by CK2 and impairs cell cycle regulation activity; when associated with A-505, A-518, A-572, A-579 and A-584." evidence="11">
    <original>S</original>
    <variation>A</variation>
    <location>
        <position position="503"/>
    </location>
</feature>
<feature type="mutagenesis site" description="Greatly impairs in vitro phosphorylation by CK2 and impairs cell cycle regulation activity; when associated with A-503, A-518, A-572, A-579 and A-584." evidence="11">
    <original>S</original>
    <variation>A</variation>
    <location>
        <position position="505"/>
    </location>
</feature>
<feature type="mutagenesis site" description="Increases transactivation activity." evidence="6">
    <original>D</original>
    <variation>R</variation>
    <location>
        <position position="510"/>
    </location>
</feature>
<feature type="mutagenesis site" description="Increases transactivation activity." evidence="6">
    <original>D</original>
    <variation>R</variation>
    <location>
        <position position="512"/>
    </location>
</feature>
<feature type="mutagenesis site" description="Greatly impairs in vitro phosphorylation by CK2 and impairs cell cycle regulation activity; when associated with A-503, A-505, A-572, A-579 and A-584." evidence="11">
    <original>S</original>
    <variation>A</variation>
    <location>
        <position position="518"/>
    </location>
</feature>
<feature type="mutagenesis site" description="Increases transactivation activity." evidence="6">
    <original>D</original>
    <variation>P</variation>
    <location>
        <position position="520"/>
    </location>
</feature>
<feature type="mutagenesis site" description="Greatly impairs in vitro phosphorylation by CK2 and impairs cell cycle regulation activity; when associated with A-503, A-505, A-518, A-579 and A-584." evidence="11">
    <original>S</original>
    <variation>A</variation>
    <location>
        <position position="572"/>
    </location>
</feature>
<feature type="mutagenesis site" description="Greatly impairs in vitro phosphorylation by CK2 and impairs cell cycle regulation activity; when associated with A-503, A-505, A-518, A-572 and A-584." evidence="11">
    <original>S</original>
    <variation>A</variation>
    <location>
        <position position="579"/>
    </location>
</feature>
<feature type="mutagenesis site" description="Greatly impairs in vitro phosphorylation by CK2 and impairs cell cycle regulation activity; when associated with A-503, A-505, A-518, A-572 and A-579." evidence="11">
    <original>S</original>
    <variation>A</variation>
    <location>
        <position position="584"/>
    </location>
</feature>
<feature type="mutagenesis site" description="Complete loss of interaction with DDX39A." evidence="12">
    <original>P</original>
    <variation>G</variation>
    <location>
        <position position="617"/>
    </location>
</feature>
<feature type="sequence conflict" description="In Ref. 2; AK225519." evidence="16" ref="2">
    <original>S</original>
    <variation>P</variation>
    <location>
        <position position="28"/>
    </location>
</feature>
<feature type="sequence conflict" description="In Ref. 2; AK225519." evidence="16" ref="2">
    <original>F</original>
    <variation>S</variation>
    <location>
        <position position="319"/>
    </location>
</feature>
<feature type="sequence conflict" description="In Ref. 2; AK225519." evidence="16" ref="2">
    <original>W</original>
    <variation>R</variation>
    <location>
        <position position="333"/>
    </location>
</feature>
<dbReference type="EMBL" id="D88208">
    <property type="protein sequence ID" value="BAA75199.1"/>
    <property type="molecule type" value="mRNA"/>
</dbReference>
<dbReference type="EMBL" id="AK315711">
    <property type="status" value="NOT_ANNOTATED_CDS"/>
    <property type="molecule type" value="mRNA"/>
</dbReference>
<dbReference type="EMBL" id="AK225519">
    <property type="status" value="NOT_ANNOTATED_CDS"/>
    <property type="molecule type" value="mRNA"/>
</dbReference>
<dbReference type="EMBL" id="AC016394">
    <property type="status" value="NOT_ANNOTATED_CDS"/>
    <property type="molecule type" value="Genomic_DNA"/>
</dbReference>
<dbReference type="EMBL" id="BC000721">
    <property type="protein sequence ID" value="AAH00721.1"/>
    <property type="molecule type" value="mRNA"/>
</dbReference>
<dbReference type="CCDS" id="CCDS44433.1">
    <molecule id="O95905-2"/>
</dbReference>
<dbReference type="CCDS" id="CCDS44434.1">
    <molecule id="O95905-3"/>
</dbReference>
<dbReference type="CCDS" id="CCDS7321.1">
    <molecule id="O95905-1"/>
</dbReference>
<dbReference type="RefSeq" id="NP_001129224.1">
    <molecule id="O95905-3"/>
    <property type="nucleotide sequence ID" value="NM_001135752.1"/>
</dbReference>
<dbReference type="RefSeq" id="NP_001129225.1">
    <molecule id="O95905-2"/>
    <property type="nucleotide sequence ID" value="NM_001135753.1"/>
</dbReference>
<dbReference type="RefSeq" id="NP_009196.1">
    <molecule id="O95905-1"/>
    <property type="nucleotide sequence ID" value="NM_007265.3"/>
</dbReference>
<dbReference type="BioGRID" id="116450">
    <property type="interactions" value="137"/>
</dbReference>
<dbReference type="FunCoup" id="O95905">
    <property type="interactions" value="4153"/>
</dbReference>
<dbReference type="IntAct" id="O95905">
    <property type="interactions" value="89"/>
</dbReference>
<dbReference type="MINT" id="O95905"/>
<dbReference type="STRING" id="9606.ENSP00000401566"/>
<dbReference type="GlyGen" id="O95905">
    <property type="glycosylation" value="1 site, 1 O-linked glycan (1 site)"/>
</dbReference>
<dbReference type="iPTMnet" id="O95905"/>
<dbReference type="PhosphoSitePlus" id="O95905"/>
<dbReference type="BioMuta" id="ECD"/>
<dbReference type="jPOST" id="O95905"/>
<dbReference type="MassIVE" id="O95905"/>
<dbReference type="PaxDb" id="9606-ENSP00000401566"/>
<dbReference type="PeptideAtlas" id="O95905"/>
<dbReference type="ProteomicsDB" id="12074"/>
<dbReference type="ProteomicsDB" id="19095"/>
<dbReference type="ProteomicsDB" id="51121">
    <molecule id="O95905-1"/>
</dbReference>
<dbReference type="Pumba" id="O95905"/>
<dbReference type="Antibodypedia" id="29316">
    <property type="antibodies" value="182 antibodies from 26 providers"/>
</dbReference>
<dbReference type="DNASU" id="11319"/>
<dbReference type="Ensembl" id="ENST00000372979.9">
    <molecule id="O95905-1"/>
    <property type="protein sequence ID" value="ENSP00000362070.4"/>
    <property type="gene ID" value="ENSG00000122882.11"/>
</dbReference>
<dbReference type="Ensembl" id="ENST00000430082.6">
    <molecule id="O95905-3"/>
    <property type="protein sequence ID" value="ENSP00000401566.1"/>
    <property type="gene ID" value="ENSG00000122882.11"/>
</dbReference>
<dbReference type="Ensembl" id="ENST00000454759.6">
    <molecule id="O95905-2"/>
    <property type="protein sequence ID" value="ENSP00000395786.1"/>
    <property type="gene ID" value="ENSG00000122882.11"/>
</dbReference>
<dbReference type="GeneID" id="11319"/>
<dbReference type="KEGG" id="hsa:11319"/>
<dbReference type="MANE-Select" id="ENST00000372979.9">
    <property type="protein sequence ID" value="ENSP00000362070.4"/>
    <property type="RefSeq nucleotide sequence ID" value="NM_007265.3"/>
    <property type="RefSeq protein sequence ID" value="NP_009196.1"/>
</dbReference>
<dbReference type="UCSC" id="uc001jtn.4">
    <molecule id="O95905-1"/>
    <property type="organism name" value="human"/>
</dbReference>
<dbReference type="AGR" id="HGNC:17029"/>
<dbReference type="CTD" id="11319"/>
<dbReference type="DisGeNET" id="11319"/>
<dbReference type="GeneCards" id="ECD"/>
<dbReference type="HGNC" id="HGNC:17029">
    <property type="gene designation" value="ECD"/>
</dbReference>
<dbReference type="HPA" id="ENSG00000122882">
    <property type="expression patterns" value="Low tissue specificity"/>
</dbReference>
<dbReference type="MIM" id="616464">
    <property type="type" value="gene"/>
</dbReference>
<dbReference type="neXtProt" id="NX_O95905"/>
<dbReference type="OpenTargets" id="ENSG00000122882"/>
<dbReference type="PharmGKB" id="PA143485450"/>
<dbReference type="VEuPathDB" id="HostDB:ENSG00000122882"/>
<dbReference type="eggNOG" id="KOG2406">
    <property type="taxonomic scope" value="Eukaryota"/>
</dbReference>
<dbReference type="GeneTree" id="ENSGT00390000015361"/>
<dbReference type="HOGENOM" id="CLU_006241_2_0_1"/>
<dbReference type="InParanoid" id="O95905"/>
<dbReference type="OMA" id="TKDYIWQ"/>
<dbReference type="OrthoDB" id="27237at2759"/>
<dbReference type="PAN-GO" id="O95905">
    <property type="GO annotations" value="1 GO annotation based on evolutionary models"/>
</dbReference>
<dbReference type="PhylomeDB" id="O95905"/>
<dbReference type="TreeFam" id="TF324229"/>
<dbReference type="PathwayCommons" id="O95905"/>
<dbReference type="SignaLink" id="O95905"/>
<dbReference type="BioGRID-ORCS" id="11319">
    <property type="hits" value="811 hits in 1165 CRISPR screens"/>
</dbReference>
<dbReference type="ChiTaRS" id="ECD">
    <property type="organism name" value="human"/>
</dbReference>
<dbReference type="GeneWiki" id="ECD_(gene)"/>
<dbReference type="GenomeRNAi" id="11319"/>
<dbReference type="Pharos" id="O95905">
    <property type="development level" value="Tbio"/>
</dbReference>
<dbReference type="PRO" id="PR:O95905"/>
<dbReference type="Proteomes" id="UP000005640">
    <property type="component" value="Chromosome 10"/>
</dbReference>
<dbReference type="RNAct" id="O95905">
    <property type="molecule type" value="protein"/>
</dbReference>
<dbReference type="Bgee" id="ENSG00000122882">
    <property type="expression patterns" value="Expressed in sural nerve and 189 other cell types or tissues"/>
</dbReference>
<dbReference type="ExpressionAtlas" id="O95905">
    <property type="expression patterns" value="baseline and differential"/>
</dbReference>
<dbReference type="GO" id="GO:0005737">
    <property type="term" value="C:cytoplasm"/>
    <property type="evidence" value="ECO:0000314"/>
    <property type="project" value="UniProtKB"/>
</dbReference>
<dbReference type="GO" id="GO:0005829">
    <property type="term" value="C:cytosol"/>
    <property type="evidence" value="ECO:0000314"/>
    <property type="project" value="HPA"/>
</dbReference>
<dbReference type="GO" id="GO:0005654">
    <property type="term" value="C:nucleoplasm"/>
    <property type="evidence" value="ECO:0000314"/>
    <property type="project" value="HPA"/>
</dbReference>
<dbReference type="GO" id="GO:0005634">
    <property type="term" value="C:nucleus"/>
    <property type="evidence" value="ECO:0000314"/>
    <property type="project" value="UniProtKB"/>
</dbReference>
<dbReference type="GO" id="GO:0035035">
    <property type="term" value="F:histone acetyltransferase binding"/>
    <property type="evidence" value="ECO:0000314"/>
    <property type="project" value="UniProtKB"/>
</dbReference>
<dbReference type="GO" id="GO:0048144">
    <property type="term" value="P:fibroblast proliferation"/>
    <property type="evidence" value="ECO:0007669"/>
    <property type="project" value="Ensembl"/>
</dbReference>
<dbReference type="GO" id="GO:0006397">
    <property type="term" value="P:mRNA processing"/>
    <property type="evidence" value="ECO:0007669"/>
    <property type="project" value="UniProtKB-KW"/>
</dbReference>
<dbReference type="GO" id="GO:0045944">
    <property type="term" value="P:positive regulation of transcription by RNA polymerase II"/>
    <property type="evidence" value="ECO:0000314"/>
    <property type="project" value="UniProtKB"/>
</dbReference>
<dbReference type="GO" id="GO:2000045">
    <property type="term" value="P:regulation of G1/S transition of mitotic cell cycle"/>
    <property type="evidence" value="ECO:0007669"/>
    <property type="project" value="Ensembl"/>
</dbReference>
<dbReference type="GO" id="GO:0008380">
    <property type="term" value="P:RNA splicing"/>
    <property type="evidence" value="ECO:0007669"/>
    <property type="project" value="UniProtKB-KW"/>
</dbReference>
<dbReference type="InterPro" id="IPR010770">
    <property type="entry name" value="Ecd"/>
</dbReference>
<dbReference type="PANTHER" id="PTHR13060:SF0">
    <property type="entry name" value="PROTEIN ECDYSONELESS HOMOLOG"/>
    <property type="match status" value="1"/>
</dbReference>
<dbReference type="PANTHER" id="PTHR13060">
    <property type="entry name" value="SGT1 PROTEIN HSGT1 SUPPRESSOR OF GCR2"/>
    <property type="match status" value="1"/>
</dbReference>
<dbReference type="Pfam" id="PF07093">
    <property type="entry name" value="SGT1"/>
    <property type="match status" value="1"/>
</dbReference>
<gene>
    <name type="primary">ECD</name>
</gene>
<protein>
    <recommendedName>
        <fullName evidence="1">Protein ecdysoneless homolog</fullName>
    </recommendedName>
    <alternativeName>
        <fullName evidence="14">Human suppressor of GCR two</fullName>
        <shortName evidence="14">hSGT1</shortName>
    </alternativeName>
</protein>
<comment type="function">
    <text evidence="4 5 6 9 11 12 17 18">Regulator of p53/TP53 stability and function. Inhibits MDM2-mediated degradation of p53/TP53 possibly by cooperating in part with TXNIP (PubMed:16849563, PubMed:23880345). May be involved transcriptional regulation. In vitro has intrinsic transactivation activity enhanced by EP300. May be a transcriptional activator required for the expression of glycolytic genes (PubMed:19919181, PubMed:9928932). Involved in regulation of cell cycle progression. Proposed to disrupt Rb-E2F binding leading to transcriptional activation of E2F proteins (PubMed:19640839). The cell cycle -regulating function may depend on its RUVBL1-mediated association with the R2TP complex (PubMed:26711270). May play a role in regulation of pre-mRNA splicing (PubMed:24722212). Participates together with DDX39A in mRNA nuclear export (PubMed:33941617).</text>
</comment>
<comment type="subunit">
    <text evidence="4 5 6 9 10 11 12">Interacts with TP53, MDM2, TXNIP (PubMed:16849563, PubMed:23880345). Interacts (phosphorylated) with PIH1D1. Interacts with RUVBL1 mediating the PIH1D1-independent association with the R2TP complex (PubMed:24656813, PubMed:26711270). Interacts with RB1, RBL1 and RBL2; ECD competes with E2F1 for binding to hypophospshorylated RB1 (PubMed:19640839). Interacts with EP300 (PubMed:19919181). Interacts with DDX39A (PubMed:33941617).</text>
</comment>
<comment type="interaction">
    <interactant intactId="EBI-2557598">
        <id>O95905</id>
    </interactant>
    <interactant intactId="EBI-357318">
        <id>Q9NWS0</id>
        <label>PIH1D1</label>
    </interactant>
    <organismsDiffer>false</organismsDiffer>
    <experiments>11</experiments>
</comment>
<comment type="interaction">
    <interactant intactId="EBI-2557598">
        <id>O95905</id>
    </interactant>
    <interactant intactId="EBI-538479">
        <id>Q6P2Q9</id>
        <label>PRPF8</label>
    </interactant>
    <organismsDiffer>false</organismsDiffer>
    <experiments>6</experiments>
</comment>
<comment type="interaction">
    <interactant intactId="EBI-2557598">
        <id>O95905</id>
    </interactant>
    <interactant intactId="EBI-353675">
        <id>Q9Y265</id>
        <label>RUVBL1</label>
    </interactant>
    <organismsDiffer>false</organismsDiffer>
    <experiments>8</experiments>
</comment>
<comment type="interaction">
    <interactant intactId="EBI-2557598">
        <id>O95905</id>
    </interactant>
    <interactant intactId="EBI-1369170">
        <id>Q9H3M7</id>
        <label>TXNIP</label>
    </interactant>
    <organismsDiffer>false</organismsDiffer>
    <experiments>6</experiments>
</comment>
<comment type="subcellular location">
    <subcellularLocation>
        <location evidence="4 6 11">Cytoplasm</location>
    </subcellularLocation>
    <subcellularLocation>
        <location evidence="4 6 11 12">Nucleus</location>
    </subcellularLocation>
    <text evidence="4 6 11">Predominantly is located in the cytoplasm.</text>
</comment>
<comment type="alternative products">
    <event type="alternative splicing"/>
    <isoform>
        <id>O95905-1</id>
        <name>1</name>
        <sequence type="displayed"/>
    </isoform>
    <isoform>
        <id>O95905-2</id>
        <name>2</name>
        <sequence type="described" ref="VSP_045670"/>
    </isoform>
    <isoform>
        <id>O95905-3</id>
        <name>3</name>
        <sequence type="described" ref="VSP_045671"/>
    </isoform>
</comment>
<comment type="tissue specificity">
    <text evidence="7 8">Highly expressed in muscle and heart. Over-expressed in pancreatic and breast cancers.</text>
</comment>
<comment type="PTM">
    <text evidence="11">Phosphorylated predominantly by CK2 on two serine-containing clusters; involved in cell cycle regulation activity.</text>
</comment>
<comment type="similarity">
    <text evidence="16">Belongs to the ECD family.</text>
</comment>
<organism>
    <name type="scientific">Homo sapiens</name>
    <name type="common">Human</name>
    <dbReference type="NCBI Taxonomy" id="9606"/>
    <lineage>
        <taxon>Eukaryota</taxon>
        <taxon>Metazoa</taxon>
        <taxon>Chordata</taxon>
        <taxon>Craniata</taxon>
        <taxon>Vertebrata</taxon>
        <taxon>Euteleostomi</taxon>
        <taxon>Mammalia</taxon>
        <taxon>Eutheria</taxon>
        <taxon>Euarchontoglires</taxon>
        <taxon>Primates</taxon>
        <taxon>Haplorrhini</taxon>
        <taxon>Catarrhini</taxon>
        <taxon>Hominidae</taxon>
        <taxon>Homo</taxon>
    </lineage>
</organism>
<sequence length="644" mass="72758">MEETMKLATMEDTVEYCLFLIPDESRDSDKHKEILQKYIERIITRFAPMLVPYIWQNQPFNLKYKPGKGGVPAHMFGVTKFGDNIEDEWFIVYVIKQITKEFPELVARIEDNDGEFLLIEAADFLPKWLDPENSTNRVFFCHGELCIIPAPRKSGAESWLPTTPPTIPQALNIITAHSEKILASESIRAAVNRRIRGYPEKIQASLHRAHCFLPAGIVAVLKQRPRLVAAAVQAFYLRDPIDLRACRVFKTFLPETRIMTSVTFTKCLYAQLVQQRFVPDRRSGYRLPPPSDPQYRAHELGMKLAHGFEILCSKCSPHFSDCKKSLVTASPLWASFLESLKKNDYFKGLIEGSAQYRERLEMAENYFQLSVDWPESSLAMSPGEEILTLLQTIPFDIEDLKKEAANLPPEDDDQWLDLSPDQLDQLLQEAVGKKESESVSKEEKEQNYDLTEVSESMKAFISKVSTHKGAELPREPSEAPITFDADSFLNYFDKILGPRPNESDSDDLDDEDFECLDSDDDLDFETHEPGEEASLKGTLDNLKSYMAQMDQELAHTCISKSFTTRNQVEPVSQTTDNNSDEEDSGTGESVMAPVDVDLNLVSNILESYSSQAGLAGPASNLLQSMGVQLPDNTDHRPTSKPTKN</sequence>
<proteinExistence type="evidence at protein level"/>
<name>ECD_HUMAN</name>
<accession>O95905</accession>
<accession>C9JX46</accession>
<accession>E9PAW8</accession>
<reference key="1">
    <citation type="journal article" date="1999" name="Mol. Gen. Genet.">
        <title>A human gene, hSGT1, can substitute for GCR2, which encodes a general regulatory factor of glycolytic gene expression in Saccharomyces cerevisiae.</title>
        <authorList>
            <person name="Sato T."/>
            <person name="Jigami Y."/>
            <person name="Suzuki T."/>
            <person name="Uemura H."/>
        </authorList>
    </citation>
    <scope>NUCLEOTIDE SEQUENCE [MRNA] (ISOFORM 1)</scope>
    <scope>FUNCTION</scope>
    <source>
        <tissue>Brain</tissue>
    </source>
</reference>
<reference key="2">
    <citation type="journal article" date="2004" name="Nat. Genet.">
        <title>Complete sequencing and characterization of 21,243 full-length human cDNAs.</title>
        <authorList>
            <person name="Ota T."/>
            <person name="Suzuki Y."/>
            <person name="Nishikawa T."/>
            <person name="Otsuki T."/>
            <person name="Sugiyama T."/>
            <person name="Irie R."/>
            <person name="Wakamatsu A."/>
            <person name="Hayashi K."/>
            <person name="Sato H."/>
            <person name="Nagai K."/>
            <person name="Kimura K."/>
            <person name="Makita H."/>
            <person name="Sekine M."/>
            <person name="Obayashi M."/>
            <person name="Nishi T."/>
            <person name="Shibahara T."/>
            <person name="Tanaka T."/>
            <person name="Ishii S."/>
            <person name="Yamamoto J."/>
            <person name="Saito K."/>
            <person name="Kawai Y."/>
            <person name="Isono Y."/>
            <person name="Nakamura Y."/>
            <person name="Nagahari K."/>
            <person name="Murakami K."/>
            <person name="Yasuda T."/>
            <person name="Iwayanagi T."/>
            <person name="Wagatsuma M."/>
            <person name="Shiratori A."/>
            <person name="Sudo H."/>
            <person name="Hosoiri T."/>
            <person name="Kaku Y."/>
            <person name="Kodaira H."/>
            <person name="Kondo H."/>
            <person name="Sugawara M."/>
            <person name="Takahashi M."/>
            <person name="Kanda K."/>
            <person name="Yokoi T."/>
            <person name="Furuya T."/>
            <person name="Kikkawa E."/>
            <person name="Omura Y."/>
            <person name="Abe K."/>
            <person name="Kamihara K."/>
            <person name="Katsuta N."/>
            <person name="Sato K."/>
            <person name="Tanikawa M."/>
            <person name="Yamazaki M."/>
            <person name="Ninomiya K."/>
            <person name="Ishibashi T."/>
            <person name="Yamashita H."/>
            <person name="Murakawa K."/>
            <person name="Fujimori K."/>
            <person name="Tanai H."/>
            <person name="Kimata M."/>
            <person name="Watanabe M."/>
            <person name="Hiraoka S."/>
            <person name="Chiba Y."/>
            <person name="Ishida S."/>
            <person name="Ono Y."/>
            <person name="Takiguchi S."/>
            <person name="Watanabe S."/>
            <person name="Yosida M."/>
            <person name="Hotuta T."/>
            <person name="Kusano J."/>
            <person name="Kanehori K."/>
            <person name="Takahashi-Fujii A."/>
            <person name="Hara H."/>
            <person name="Tanase T.-O."/>
            <person name="Nomura Y."/>
            <person name="Togiya S."/>
            <person name="Komai F."/>
            <person name="Hara R."/>
            <person name="Takeuchi K."/>
            <person name="Arita M."/>
            <person name="Imose N."/>
            <person name="Musashino K."/>
            <person name="Yuuki H."/>
            <person name="Oshima A."/>
            <person name="Sasaki N."/>
            <person name="Aotsuka S."/>
            <person name="Yoshikawa Y."/>
            <person name="Matsunawa H."/>
            <person name="Ichihara T."/>
            <person name="Shiohata N."/>
            <person name="Sano S."/>
            <person name="Moriya S."/>
            <person name="Momiyama H."/>
            <person name="Satoh N."/>
            <person name="Takami S."/>
            <person name="Terashima Y."/>
            <person name="Suzuki O."/>
            <person name="Nakagawa S."/>
            <person name="Senoh A."/>
            <person name="Mizoguchi H."/>
            <person name="Goto Y."/>
            <person name="Shimizu F."/>
            <person name="Wakebe H."/>
            <person name="Hishigaki H."/>
            <person name="Watanabe T."/>
            <person name="Sugiyama A."/>
            <person name="Takemoto M."/>
            <person name="Kawakami B."/>
            <person name="Yamazaki M."/>
            <person name="Watanabe K."/>
            <person name="Kumagai A."/>
            <person name="Itakura S."/>
            <person name="Fukuzumi Y."/>
            <person name="Fujimori Y."/>
            <person name="Komiyama M."/>
            <person name="Tashiro H."/>
            <person name="Tanigami A."/>
            <person name="Fujiwara T."/>
            <person name="Ono T."/>
            <person name="Yamada K."/>
            <person name="Fujii Y."/>
            <person name="Ozaki K."/>
            <person name="Hirao M."/>
            <person name="Ohmori Y."/>
            <person name="Kawabata A."/>
            <person name="Hikiji T."/>
            <person name="Kobatake N."/>
            <person name="Inagaki H."/>
            <person name="Ikema Y."/>
            <person name="Okamoto S."/>
            <person name="Okitani R."/>
            <person name="Kawakami T."/>
            <person name="Noguchi S."/>
            <person name="Itoh T."/>
            <person name="Shigeta K."/>
            <person name="Senba T."/>
            <person name="Matsumura K."/>
            <person name="Nakajima Y."/>
            <person name="Mizuno T."/>
            <person name="Morinaga M."/>
            <person name="Sasaki M."/>
            <person name="Togashi T."/>
            <person name="Oyama M."/>
            <person name="Hata H."/>
            <person name="Watanabe M."/>
            <person name="Komatsu T."/>
            <person name="Mizushima-Sugano J."/>
            <person name="Satoh T."/>
            <person name="Shirai Y."/>
            <person name="Takahashi Y."/>
            <person name="Nakagawa K."/>
            <person name="Okumura K."/>
            <person name="Nagase T."/>
            <person name="Nomura N."/>
            <person name="Kikuchi H."/>
            <person name="Masuho Y."/>
            <person name="Yamashita R."/>
            <person name="Nakai K."/>
            <person name="Yada T."/>
            <person name="Nakamura Y."/>
            <person name="Ohara O."/>
            <person name="Isogai T."/>
            <person name="Sugano S."/>
        </authorList>
    </citation>
    <scope>NUCLEOTIDE SEQUENCE [LARGE SCALE MRNA] (ISOFORM 3)</scope>
    <source>
        <tissue>Testis</tissue>
    </source>
</reference>
<reference key="3">
    <citation type="submission" date="2006-07" db="EMBL/GenBank/DDBJ databases">
        <authorList>
            <person name="Suzuki Y."/>
            <person name="Sugano S."/>
            <person name="Totoki Y."/>
            <person name="Toyoda A."/>
            <person name="Takeda T."/>
            <person name="Sakaki Y."/>
            <person name="Tanaka A."/>
            <person name="Yokoyama S."/>
        </authorList>
    </citation>
    <scope>NUCLEOTIDE SEQUENCE [LARGE SCALE MRNA] (ISOFORM 2)</scope>
    <source>
        <tissue>Signet-ring cell carcinoma</tissue>
    </source>
</reference>
<reference key="4">
    <citation type="journal article" date="2004" name="Nature">
        <title>The DNA sequence and comparative analysis of human chromosome 10.</title>
        <authorList>
            <person name="Deloukas P."/>
            <person name="Earthrowl M.E."/>
            <person name="Grafham D.V."/>
            <person name="Rubenfield M."/>
            <person name="French L."/>
            <person name="Steward C.A."/>
            <person name="Sims S.K."/>
            <person name="Jones M.C."/>
            <person name="Searle S."/>
            <person name="Scott C."/>
            <person name="Howe K."/>
            <person name="Hunt S.E."/>
            <person name="Andrews T.D."/>
            <person name="Gilbert J.G.R."/>
            <person name="Swarbreck D."/>
            <person name="Ashurst J.L."/>
            <person name="Taylor A."/>
            <person name="Battles J."/>
            <person name="Bird C.P."/>
            <person name="Ainscough R."/>
            <person name="Almeida J.P."/>
            <person name="Ashwell R.I.S."/>
            <person name="Ambrose K.D."/>
            <person name="Babbage A.K."/>
            <person name="Bagguley C.L."/>
            <person name="Bailey J."/>
            <person name="Banerjee R."/>
            <person name="Bates K."/>
            <person name="Beasley H."/>
            <person name="Bray-Allen S."/>
            <person name="Brown A.J."/>
            <person name="Brown J.Y."/>
            <person name="Burford D.C."/>
            <person name="Burrill W."/>
            <person name="Burton J."/>
            <person name="Cahill P."/>
            <person name="Camire D."/>
            <person name="Carter N.P."/>
            <person name="Chapman J.C."/>
            <person name="Clark S.Y."/>
            <person name="Clarke G."/>
            <person name="Clee C.M."/>
            <person name="Clegg S."/>
            <person name="Corby N."/>
            <person name="Coulson A."/>
            <person name="Dhami P."/>
            <person name="Dutta I."/>
            <person name="Dunn M."/>
            <person name="Faulkner L."/>
            <person name="Frankish A."/>
            <person name="Frankland J.A."/>
            <person name="Garner P."/>
            <person name="Garnett J."/>
            <person name="Gribble S."/>
            <person name="Griffiths C."/>
            <person name="Grocock R."/>
            <person name="Gustafson E."/>
            <person name="Hammond S."/>
            <person name="Harley J.L."/>
            <person name="Hart E."/>
            <person name="Heath P.D."/>
            <person name="Ho T.P."/>
            <person name="Hopkins B."/>
            <person name="Horne J."/>
            <person name="Howden P.J."/>
            <person name="Huckle E."/>
            <person name="Hynds C."/>
            <person name="Johnson C."/>
            <person name="Johnson D."/>
            <person name="Kana A."/>
            <person name="Kay M."/>
            <person name="Kimberley A.M."/>
            <person name="Kershaw J.K."/>
            <person name="Kokkinaki M."/>
            <person name="Laird G.K."/>
            <person name="Lawlor S."/>
            <person name="Lee H.M."/>
            <person name="Leongamornlert D.A."/>
            <person name="Laird G."/>
            <person name="Lloyd C."/>
            <person name="Lloyd D.M."/>
            <person name="Loveland J."/>
            <person name="Lovell J."/>
            <person name="McLaren S."/>
            <person name="McLay K.E."/>
            <person name="McMurray A."/>
            <person name="Mashreghi-Mohammadi M."/>
            <person name="Matthews L."/>
            <person name="Milne S."/>
            <person name="Nickerson T."/>
            <person name="Nguyen M."/>
            <person name="Overton-Larty E."/>
            <person name="Palmer S.A."/>
            <person name="Pearce A.V."/>
            <person name="Peck A.I."/>
            <person name="Pelan S."/>
            <person name="Phillimore B."/>
            <person name="Porter K."/>
            <person name="Rice C.M."/>
            <person name="Rogosin A."/>
            <person name="Ross M.T."/>
            <person name="Sarafidou T."/>
            <person name="Sehra H.K."/>
            <person name="Shownkeen R."/>
            <person name="Skuce C.D."/>
            <person name="Smith M."/>
            <person name="Standring L."/>
            <person name="Sycamore N."/>
            <person name="Tester J."/>
            <person name="Thorpe A."/>
            <person name="Torcasso W."/>
            <person name="Tracey A."/>
            <person name="Tromans A."/>
            <person name="Tsolas J."/>
            <person name="Wall M."/>
            <person name="Walsh J."/>
            <person name="Wang H."/>
            <person name="Weinstock K."/>
            <person name="West A.P."/>
            <person name="Willey D.L."/>
            <person name="Whitehead S.L."/>
            <person name="Wilming L."/>
            <person name="Wray P.W."/>
            <person name="Young L."/>
            <person name="Chen Y."/>
            <person name="Lovering R.C."/>
            <person name="Moschonas N.K."/>
            <person name="Siebert R."/>
            <person name="Fechtel K."/>
            <person name="Bentley D."/>
            <person name="Durbin R.M."/>
            <person name="Hubbard T."/>
            <person name="Doucette-Stamm L."/>
            <person name="Beck S."/>
            <person name="Smith D.R."/>
            <person name="Rogers J."/>
        </authorList>
    </citation>
    <scope>NUCLEOTIDE SEQUENCE [LARGE SCALE GENOMIC DNA]</scope>
</reference>
<reference key="5">
    <citation type="journal article" date="2004" name="Genome Res.">
        <title>The status, quality, and expansion of the NIH full-length cDNA project: the Mammalian Gene Collection (MGC).</title>
        <authorList>
            <consortium name="The MGC Project Team"/>
        </authorList>
    </citation>
    <scope>NUCLEOTIDE SEQUENCE [LARGE SCALE MRNA] (ISOFORM 1)</scope>
    <source>
        <tissue>Placenta</tissue>
    </source>
</reference>
<reference key="6">
    <citation type="journal article" date="2006" name="Cancer Res.">
        <title>The human orthologue of Drosophila ecdysoneless protein interacts with p53 and regulates its function.</title>
        <authorList>
            <person name="Zhang Y."/>
            <person name="Chen J."/>
            <person name="Gurumurthy C.B."/>
            <person name="Kim J."/>
            <person name="Bhat I."/>
            <person name="Gao Q."/>
            <person name="Dimri G."/>
            <person name="Lee S.W."/>
            <person name="Band H."/>
            <person name="Band V."/>
        </authorList>
    </citation>
    <scope>FUNCTION</scope>
    <scope>INTERACTION WITH TP53 AND MDM2</scope>
    <scope>SUBCELLULAR LOCATION</scope>
</reference>
<reference key="7">
    <citation type="journal article" date="2006" name="Cell">
        <title>Global, in vivo, and site-specific phosphorylation dynamics in signaling networks.</title>
        <authorList>
            <person name="Olsen J.V."/>
            <person name="Blagoev B."/>
            <person name="Gnad F."/>
            <person name="Macek B."/>
            <person name="Kumar C."/>
            <person name="Mortensen P."/>
            <person name="Mann M."/>
        </authorList>
    </citation>
    <scope>PHOSPHORYLATION [LARGE SCALE ANALYSIS] AT SER-518</scope>
    <scope>IDENTIFICATION BY MASS SPECTROMETRY [LARGE SCALE ANALYSIS]</scope>
    <source>
        <tissue>Cervix carcinoma</tissue>
    </source>
</reference>
<reference key="8">
    <citation type="journal article" date="2008" name="Proc. Natl. Acad. Sci. U.S.A.">
        <title>A quantitative atlas of mitotic phosphorylation.</title>
        <authorList>
            <person name="Dephoure N."/>
            <person name="Zhou C."/>
            <person name="Villen J."/>
            <person name="Beausoleil S.A."/>
            <person name="Bakalarski C.E."/>
            <person name="Elledge S.J."/>
            <person name="Gygi S.P."/>
        </authorList>
    </citation>
    <scope>PHOSPHORYLATION [LARGE SCALE ANALYSIS] AT SER-503; SER-505 AND SER-518</scope>
    <scope>IDENTIFICATION BY MASS SPECTROMETRY [LARGE SCALE ANALYSIS]</scope>
    <source>
        <tissue>Cervix carcinoma</tissue>
    </source>
</reference>
<reference key="9">
    <citation type="journal article" date="2009" name="J. Biol. Chem.">
        <title>Role of mammalian Ecdysoneless in cell cycle regulation.</title>
        <authorList>
            <person name="Kim J.H."/>
            <person name="Gurumurthy C.B."/>
            <person name="Naramura M."/>
            <person name="Zhang Y."/>
            <person name="Dudley A.T."/>
            <person name="Doglio L."/>
            <person name="Band H."/>
            <person name="Band V."/>
        </authorList>
    </citation>
    <scope>FUNCTION</scope>
    <scope>INTERACTION WITH RB1; RBL1 AND RBL2</scope>
</reference>
<reference key="10">
    <citation type="journal article" date="2010" name="Biol. Chem.">
        <title>Biochemical characterization of human Ecdysoneless reveals a role in transcriptional regulation.</title>
        <authorList>
            <person name="Kim J.H."/>
            <person name="Gurumurthy C.B."/>
            <person name="Band H."/>
            <person name="Band V."/>
        </authorList>
    </citation>
    <scope>FUNCTION</scope>
    <scope>INTERACTION WITH EP300</scope>
    <scope>SUBCELLULAR LOCATION</scope>
    <scope>MUTAGENESIS OF ILE-481; ASP-484; LEU-489; ASP-510; ASP-512 AND ASP-520</scope>
</reference>
<reference key="11">
    <citation type="journal article" date="2011" name="BMC Syst. Biol.">
        <title>Initial characterization of the human central proteome.</title>
        <authorList>
            <person name="Burkard T.R."/>
            <person name="Planyavsky M."/>
            <person name="Kaupe I."/>
            <person name="Breitwieser F.P."/>
            <person name="Buerckstuemmer T."/>
            <person name="Bennett K.L."/>
            <person name="Superti-Furga G."/>
            <person name="Colinge J."/>
        </authorList>
    </citation>
    <scope>IDENTIFICATION BY MASS SPECTROMETRY [LARGE SCALE ANALYSIS]</scope>
</reference>
<reference key="12">
    <citation type="journal article" date="2011" name="Sci. Signal.">
        <title>System-wide temporal characterization of the proteome and phosphoproteome of human embryonic stem cell differentiation.</title>
        <authorList>
            <person name="Rigbolt K.T."/>
            <person name="Prokhorova T.A."/>
            <person name="Akimov V."/>
            <person name="Henningsen J."/>
            <person name="Johansen P.T."/>
            <person name="Kratchmarova I."/>
            <person name="Kassem M."/>
            <person name="Mann M."/>
            <person name="Olsen J.V."/>
            <person name="Blagoev B."/>
        </authorList>
    </citation>
    <scope>IDENTIFICATION BY MASS SPECTROMETRY [LARGE SCALE ANALYSIS]</scope>
</reference>
<reference key="13">
    <citation type="journal article" date="2012" name="Breast Cancer Res. Treat.">
        <title>Overexpression of a novel cell cycle regulator ecdysoneless in breast cancer: a marker of poor prognosis in HER2/neu-overexpressing breast cancer patients.</title>
        <authorList>
            <person name="Zhao X."/>
            <person name="Mirza S."/>
            <person name="Alshareeda A."/>
            <person name="Zhang Y."/>
            <person name="Gurumurthy C.B."/>
            <person name="Bele A."/>
            <person name="Kim J.H."/>
            <person name="Mohibi S."/>
            <person name="Goswami M."/>
            <person name="Lele S.M."/>
            <person name="West W."/>
            <person name="Qiu F."/>
            <person name="Ellis I.O."/>
            <person name="Rakha E.A."/>
            <person name="Green A.R."/>
            <person name="Band H."/>
            <person name="Band V."/>
        </authorList>
    </citation>
    <scope>TISSUE SPECIFICITY</scope>
</reference>
<reference key="14">
    <citation type="journal article" date="2012" name="Clin. Cancer Res.">
        <title>Overexpression of ecdysoneless in pancreatic cancer and its role in oncogenesis by regulating glycolysis.</title>
        <authorList>
            <person name="Dey P."/>
            <person name="Rachagani S."/>
            <person name="Chakraborty S."/>
            <person name="Singh P.K."/>
            <person name="Zhao X."/>
            <person name="Gurumurthy C.B."/>
            <person name="Anderson J.M."/>
            <person name="Lele S."/>
            <person name="Hollingsworth M.A."/>
            <person name="Band V."/>
            <person name="Batra S.K."/>
        </authorList>
    </citation>
    <scope>TISSUE SPECIFICITY</scope>
</reference>
<reference key="15">
    <citation type="journal article" date="2013" name="Biochem. Biophys. Res. Commun.">
        <title>TXNIP interacts with hEcd to increase p53 stability and activity.</title>
        <authorList>
            <person name="Suh H.W."/>
            <person name="Yun S."/>
            <person name="Song H."/>
            <person name="Jung H."/>
            <person name="Park Y.J."/>
            <person name="Kim T.D."/>
            <person name="Yoon S.R."/>
            <person name="Choi I."/>
        </authorList>
    </citation>
    <scope>FUNCTION</scope>
    <scope>INTERACTION WITH TXNIP</scope>
</reference>
<reference key="16">
    <citation type="journal article" date="2014" name="Cell Rep.">
        <title>Phosphorylation-dependent PIH1D1 interactions define substrate specificity of the R2TP cochaperone complex.</title>
        <authorList>
            <person name="Horejsi Z."/>
            <person name="Stach L."/>
            <person name="Flower T.G."/>
            <person name="Joshi D."/>
            <person name="Flynn H."/>
            <person name="Skehel J.M."/>
            <person name="O'Reilly N.J."/>
            <person name="Ogrodowicz R.W."/>
            <person name="Smerdon S.J."/>
            <person name="Boulton S.J."/>
        </authorList>
    </citation>
    <scope>INTERACTION WITH PIH1D1</scope>
</reference>
<reference key="17">
    <citation type="journal article" date="2014" name="J. Proteomics">
        <title>An enzyme assisted RP-RPLC approach for in-depth analysis of human liver phosphoproteome.</title>
        <authorList>
            <person name="Bian Y."/>
            <person name="Song C."/>
            <person name="Cheng K."/>
            <person name="Dong M."/>
            <person name="Wang F."/>
            <person name="Huang J."/>
            <person name="Sun D."/>
            <person name="Wang L."/>
            <person name="Ye M."/>
            <person name="Zou H."/>
        </authorList>
    </citation>
    <scope>IDENTIFICATION BY MASS SPECTROMETRY [LARGE SCALE ANALYSIS]</scope>
    <source>
        <tissue>Liver</tissue>
    </source>
</reference>
<reference key="18">
    <citation type="journal article" date="2014" name="PLoS Genet.">
        <title>Unexpected role of the steroid-deficiency protein ecdysoneless in pre-mRNA splicing.</title>
        <authorList>
            <person name="Claudius A.K."/>
            <person name="Romani P."/>
            <person name="Lamkemeyer T."/>
            <person name="Jindra M."/>
            <person name="Uhlirova M."/>
        </authorList>
    </citation>
    <scope>FUNCTION</scope>
</reference>
<reference key="19">
    <citation type="journal article" date="2015" name="Mol. Cell. Biol.">
        <title>A novel interaction of ecdysoneless (ECD) protein with R2TP complex component RUVBL1 is required for the functional role of ECD in cell cycle progression.</title>
        <authorList>
            <person name="Mir R.A."/>
            <person name="Bele A."/>
            <person name="Mirza S."/>
            <person name="Srivastava S."/>
            <person name="Olou A.A."/>
            <person name="Ammons S.A."/>
            <person name="Kim J.H."/>
            <person name="Gurumurthy C.B."/>
            <person name="Qiu F."/>
            <person name="Band H."/>
            <person name="Band V."/>
        </authorList>
    </citation>
    <scope>PHOSPHORYLATION</scope>
    <scope>SUBCELLULAR LOCATION</scope>
    <scope>INTERACTION WITH RUVBL1</scope>
    <scope>ASSOCIATION WITH THE R2TP COMPLEX</scope>
    <scope>MUTAGENESIS OF SER-503; SER-505; SER-518; SER-572; SER-579 AND SER-584</scope>
</reference>
<reference key="20">
    <citation type="journal article" date="2021" name="Mol. Cell. Biol.">
        <title>The Mammalian Ecdysoneless Protein Interacts with RNA Helicase DDX39A To Regulate Nuclear mRNA Export.</title>
        <authorList>
            <person name="Saleem I."/>
            <person name="Mirza S."/>
            <person name="Sarkar A."/>
            <person name="Raza M."/>
            <person name="Mohapatra B."/>
            <person name="Mushtaq I."/>
            <person name="Kim J.H."/>
            <person name="Mishra N.K."/>
            <person name="Alsaleem M.A."/>
            <person name="Rakha E.A."/>
            <person name="Qiu F."/>
            <person name="Guda C."/>
            <person name="Band H."/>
            <person name="Band V."/>
        </authorList>
    </citation>
    <scope>FUNCTION</scope>
    <scope>INTERACTION WITH DDX41</scope>
    <scope>SUBCELLULAR LOCATION</scope>
    <scope>MUTAGENESIS OF PRO-617</scope>
</reference>
<reference key="21">
    <citation type="journal article" date="2001" name="Am. J. Hum. Genet.">
        <title>Usher syndrome 1D and nonsyndromic autosomal recessive deafness DFNB12 are caused by allelic mutations of the novel cadherin-like gene CDH23.</title>
        <authorList>
            <person name="Bork J.M."/>
            <person name="Peters L.M."/>
            <person name="Riazuddin S."/>
            <person name="Bernstein S.L."/>
            <person name="Ahmed Z.M."/>
            <person name="Ness S.L."/>
            <person name="Polomeno R."/>
            <person name="Ramesh A."/>
            <person name="Schloss M."/>
            <person name="Srisailpathy C.R.S."/>
            <person name="Wayne S."/>
            <person name="Bellman S."/>
            <person name="Desmukh D."/>
            <person name="Ahmed Z."/>
            <person name="Khan S.N."/>
            <person name="Kaloustian V.M.D."/>
            <person name="Li X.C."/>
            <person name="Lalwani A."/>
            <person name="Riazuddin S."/>
            <person name="Bitner-Glindzicz M."/>
            <person name="Nance W.E."/>
            <person name="Liu X.-Z."/>
            <person name="Wistow G."/>
            <person name="Smith R.J.H."/>
            <person name="Griffith A.J."/>
            <person name="Wilcox E.R."/>
            <person name="Friedman T.B."/>
            <person name="Morell R.J."/>
        </authorList>
    </citation>
    <scope>VARIANT GLY-281</scope>
</reference>